<evidence type="ECO:0000255" key="1">
    <source>
        <dbReference type="HAMAP-Rule" id="MF_03109"/>
    </source>
</evidence>
<evidence type="ECO:0000255" key="2">
    <source>
        <dbReference type="PROSITE-ProRule" id="PRU01052"/>
    </source>
</evidence>
<evidence type="ECO:0000256" key="3">
    <source>
        <dbReference type="SAM" id="MobiDB-lite"/>
    </source>
</evidence>
<reference key="1">
    <citation type="journal article" date="2004" name="Nature">
        <title>Genome evolution in yeasts.</title>
        <authorList>
            <person name="Dujon B."/>
            <person name="Sherman D."/>
            <person name="Fischer G."/>
            <person name="Durrens P."/>
            <person name="Casaregola S."/>
            <person name="Lafontaine I."/>
            <person name="de Montigny J."/>
            <person name="Marck C."/>
            <person name="Neuveglise C."/>
            <person name="Talla E."/>
            <person name="Goffard N."/>
            <person name="Frangeul L."/>
            <person name="Aigle M."/>
            <person name="Anthouard V."/>
            <person name="Babour A."/>
            <person name="Barbe V."/>
            <person name="Barnay S."/>
            <person name="Blanchin S."/>
            <person name="Beckerich J.-M."/>
            <person name="Beyne E."/>
            <person name="Bleykasten C."/>
            <person name="Boisrame A."/>
            <person name="Boyer J."/>
            <person name="Cattolico L."/>
            <person name="Confanioleri F."/>
            <person name="de Daruvar A."/>
            <person name="Despons L."/>
            <person name="Fabre E."/>
            <person name="Fairhead C."/>
            <person name="Ferry-Dumazet H."/>
            <person name="Groppi A."/>
            <person name="Hantraye F."/>
            <person name="Hennequin C."/>
            <person name="Jauniaux N."/>
            <person name="Joyet P."/>
            <person name="Kachouri R."/>
            <person name="Kerrest A."/>
            <person name="Koszul R."/>
            <person name="Lemaire M."/>
            <person name="Lesur I."/>
            <person name="Ma L."/>
            <person name="Muller H."/>
            <person name="Nicaud J.-M."/>
            <person name="Nikolski M."/>
            <person name="Oztas S."/>
            <person name="Ozier-Kalogeropoulos O."/>
            <person name="Pellenz S."/>
            <person name="Potier S."/>
            <person name="Richard G.-F."/>
            <person name="Straub M.-L."/>
            <person name="Suleau A."/>
            <person name="Swennen D."/>
            <person name="Tekaia F."/>
            <person name="Wesolowski-Louvel M."/>
            <person name="Westhof E."/>
            <person name="Wirth B."/>
            <person name="Zeniou-Meyer M."/>
            <person name="Zivanovic Y."/>
            <person name="Bolotin-Fukuhara M."/>
            <person name="Thierry A."/>
            <person name="Bouchier C."/>
            <person name="Caudron B."/>
            <person name="Scarpelli C."/>
            <person name="Gaillardin C."/>
            <person name="Weissenbach J."/>
            <person name="Wincker P."/>
            <person name="Souciet J.-L."/>
        </authorList>
    </citation>
    <scope>NUCLEOTIDE SEQUENCE [LARGE SCALE GENOMIC DNA]</scope>
    <source>
        <strain>CLIB 122 / E 150</strain>
    </source>
</reference>
<accession>Q6C3B0</accession>
<dbReference type="EC" id="3.6.5.-" evidence="1"/>
<dbReference type="EMBL" id="CR382132">
    <property type="protein sequence ID" value="CAG77654.1"/>
    <property type="molecule type" value="Genomic_DNA"/>
</dbReference>
<dbReference type="RefSeq" id="XP_504852.1">
    <property type="nucleotide sequence ID" value="XM_504852.1"/>
</dbReference>
<dbReference type="SMR" id="Q6C3B0"/>
<dbReference type="FunCoup" id="Q6C3B0">
    <property type="interactions" value="60"/>
</dbReference>
<dbReference type="STRING" id="284591.Q6C3B0"/>
<dbReference type="EnsemblFungi" id="CAG77654">
    <property type="protein sequence ID" value="CAG77654"/>
    <property type="gene ID" value="YALI0_F01166g"/>
</dbReference>
<dbReference type="KEGG" id="yli:2908213"/>
<dbReference type="VEuPathDB" id="FungiDB:YALI0_F01166g"/>
<dbReference type="HOGENOM" id="CLU_011270_0_0_1"/>
<dbReference type="InParanoid" id="Q6C3B0"/>
<dbReference type="OMA" id="PIIKMTE"/>
<dbReference type="OrthoDB" id="1959at4891"/>
<dbReference type="Proteomes" id="UP000001300">
    <property type="component" value="Chromosome F"/>
</dbReference>
<dbReference type="GO" id="GO:0005783">
    <property type="term" value="C:endoplasmic reticulum"/>
    <property type="evidence" value="ECO:0000318"/>
    <property type="project" value="GO_Central"/>
</dbReference>
<dbReference type="GO" id="GO:0005789">
    <property type="term" value="C:endoplasmic reticulum membrane"/>
    <property type="evidence" value="ECO:0007669"/>
    <property type="project" value="UniProtKB-SubCell"/>
</dbReference>
<dbReference type="GO" id="GO:0005525">
    <property type="term" value="F:GTP binding"/>
    <property type="evidence" value="ECO:0007669"/>
    <property type="project" value="UniProtKB-UniRule"/>
</dbReference>
<dbReference type="GO" id="GO:0003924">
    <property type="term" value="F:GTPase activity"/>
    <property type="evidence" value="ECO:0000318"/>
    <property type="project" value="GO_Central"/>
</dbReference>
<dbReference type="GO" id="GO:0016320">
    <property type="term" value="P:endoplasmic reticulum membrane fusion"/>
    <property type="evidence" value="ECO:0000318"/>
    <property type="project" value="GO_Central"/>
</dbReference>
<dbReference type="CDD" id="cd01851">
    <property type="entry name" value="GBP"/>
    <property type="match status" value="1"/>
</dbReference>
<dbReference type="FunFam" id="3.40.50.300:FF:000727">
    <property type="entry name" value="Protein SEY1 homolog"/>
    <property type="match status" value="1"/>
</dbReference>
<dbReference type="Gene3D" id="3.40.50.300">
    <property type="entry name" value="P-loop containing nucleotide triphosphate hydrolases"/>
    <property type="match status" value="1"/>
</dbReference>
<dbReference type="HAMAP" id="MF_03109">
    <property type="entry name" value="Sey1"/>
    <property type="match status" value="1"/>
</dbReference>
<dbReference type="InterPro" id="IPR030386">
    <property type="entry name" value="G_GB1_RHD3_dom"/>
</dbReference>
<dbReference type="InterPro" id="IPR027417">
    <property type="entry name" value="P-loop_NTPase"/>
</dbReference>
<dbReference type="InterPro" id="IPR008803">
    <property type="entry name" value="RHD3/Sey1"/>
</dbReference>
<dbReference type="InterPro" id="IPR046758">
    <property type="entry name" value="Sey1/RHD3-like_3HB"/>
</dbReference>
<dbReference type="PANTHER" id="PTHR45923">
    <property type="entry name" value="PROTEIN SEY1"/>
    <property type="match status" value="1"/>
</dbReference>
<dbReference type="PANTHER" id="PTHR45923:SF2">
    <property type="entry name" value="PROTEIN SEY1"/>
    <property type="match status" value="1"/>
</dbReference>
<dbReference type="Pfam" id="PF05879">
    <property type="entry name" value="RHD3_GTPase"/>
    <property type="match status" value="1"/>
</dbReference>
<dbReference type="Pfam" id="PF20428">
    <property type="entry name" value="Sey1_3HB"/>
    <property type="match status" value="1"/>
</dbReference>
<dbReference type="SUPFAM" id="SSF52540">
    <property type="entry name" value="P-loop containing nucleoside triphosphate hydrolases"/>
    <property type="match status" value="1"/>
</dbReference>
<dbReference type="PROSITE" id="PS51715">
    <property type="entry name" value="G_GB1_RHD3"/>
    <property type="match status" value="1"/>
</dbReference>
<keyword id="KW-0175">Coiled coil</keyword>
<keyword id="KW-0256">Endoplasmic reticulum</keyword>
<keyword id="KW-0342">GTP-binding</keyword>
<keyword id="KW-0378">Hydrolase</keyword>
<keyword id="KW-0472">Membrane</keyword>
<keyword id="KW-0547">Nucleotide-binding</keyword>
<keyword id="KW-1185">Reference proteome</keyword>
<keyword id="KW-0812">Transmembrane</keyword>
<keyword id="KW-1133">Transmembrane helix</keyword>
<name>SEY1_YARLI</name>
<sequence>MTSQSHGAPPVPSSRPPASRVPVSGYDSHDSHSVSSSHSSHSPVTTHHHPAPPPPASRPVRESGVAPVTAPEPIAAPEPIAAPEPIPAPEPIAAPVPEGLKSEHKPVEREHKPVERKPVSSPAEKSIPASSPVHKAAPTPAASHAVPTSQKSAKSTPGSYAGIPSLQLIDGNKEFNPDVSSYFKKVHLDRAGLDYHVVAVFGSQSTGKSTLLNALFGTQFDVMNETARQQTTKGIWMARAQLEAPHSANSAHSQDCSDSGVLVMDVEGTDGRERGEDQDFERKSALFALATSEVLIVNIWEHQIGLYQGANMGLLKTVFEVNLNLFATSQNRSLIMFVIRDHIGATPLANLSTTLKTDMGKLWDSINKPEGLEHAKLEDFFDLQFTALPHKLLQPNEFYADVEQLACRFTVPKDPNYVFKPVYHRNVPLDGWSFYAEQVWDQIEQNKDLDLPTQQILVARFRCDEIAAGALDIFLSLLVKIRDQLSGGAVASAVLGGLMGEARKQTVDEYDSQASRYTPSVYSATLEKLEDRVDNDLGKVYQSYLAQLKRESLEQFNAALESSSALTFGENLSRASKAAHAHFIDNAKQVTAAIGQPNSSHFSYDDTLAALEQELDTLRDHKSKVEIDRLISRSAKRFKSSFHEEFDENLNKPDETVWDRILESFETLLNASIKKIDPNYSPSAPSAFSFGFGSPKTSAEGLKQIQQEAWAVFGAELKELSKEEQVLSRLKNKFKESFRYDANGVPIVWRPGDDIDGAFAKSREQALEIMPLLSTAKLSSGKSIEPTVALEDDEDDDDETAFAVILTPKRQASLIEKFKKQAEGLYLEAKRSTIQSTTQIPLYMYGLLLLLGWNEIMAVLRSPVYFMFLLVAAGAAYVIHTLHLWGPLTHMTNTMIAEATDMAKAKLKQVLNEAPTGETREREAPVGSSRDDVELKDL</sequence>
<protein>
    <recommendedName>
        <fullName evidence="1">Protein SEY1</fullName>
        <ecNumber evidence="1">3.6.5.-</ecNumber>
    </recommendedName>
</protein>
<gene>
    <name evidence="1" type="primary">SEY1</name>
    <name type="ordered locus">YALI0F01166g</name>
</gene>
<proteinExistence type="inferred from homology"/>
<organism>
    <name type="scientific">Yarrowia lipolytica (strain CLIB 122 / E 150)</name>
    <name type="common">Yeast</name>
    <name type="synonym">Candida lipolytica</name>
    <dbReference type="NCBI Taxonomy" id="284591"/>
    <lineage>
        <taxon>Eukaryota</taxon>
        <taxon>Fungi</taxon>
        <taxon>Dikarya</taxon>
        <taxon>Ascomycota</taxon>
        <taxon>Saccharomycotina</taxon>
        <taxon>Dipodascomycetes</taxon>
        <taxon>Dipodascales</taxon>
        <taxon>Dipodascales incertae sedis</taxon>
        <taxon>Yarrowia</taxon>
    </lineage>
</organism>
<feature type="chain" id="PRO_0000155138" description="Protein SEY1">
    <location>
        <begin position="1"/>
        <end position="938"/>
    </location>
</feature>
<feature type="topological domain" description="Cytoplasmic" evidence="1">
    <location>
        <begin position="1"/>
        <end position="839"/>
    </location>
</feature>
<feature type="transmembrane region" description="Helical" evidence="1">
    <location>
        <begin position="840"/>
        <end position="860"/>
    </location>
</feature>
<feature type="topological domain" description="Lumenal" evidence="1">
    <location>
        <begin position="861"/>
        <end position="863"/>
    </location>
</feature>
<feature type="transmembrane region" description="Helical" evidence="1">
    <location>
        <begin position="864"/>
        <end position="884"/>
    </location>
</feature>
<feature type="topological domain" description="Cytoplasmic" evidence="1">
    <location>
        <begin position="885"/>
        <end position="938"/>
    </location>
</feature>
<feature type="domain" description="GB1/RHD3-type G" evidence="2">
    <location>
        <begin position="192"/>
        <end position="423"/>
    </location>
</feature>
<feature type="region of interest" description="Disordered" evidence="3">
    <location>
        <begin position="1"/>
        <end position="159"/>
    </location>
</feature>
<feature type="region of interest" description="Disordered" evidence="3">
    <location>
        <begin position="911"/>
        <end position="938"/>
    </location>
</feature>
<feature type="coiled-coil region" evidence="1">
    <location>
        <begin position="603"/>
        <end position="630"/>
    </location>
</feature>
<feature type="compositionally biased region" description="Low complexity" evidence="3">
    <location>
        <begin position="33"/>
        <end position="45"/>
    </location>
</feature>
<feature type="compositionally biased region" description="Pro residues" evidence="3">
    <location>
        <begin position="74"/>
        <end position="94"/>
    </location>
</feature>
<feature type="compositionally biased region" description="Basic and acidic residues" evidence="3">
    <location>
        <begin position="100"/>
        <end position="118"/>
    </location>
</feature>
<feature type="compositionally biased region" description="Polar residues" evidence="3">
    <location>
        <begin position="146"/>
        <end position="158"/>
    </location>
</feature>
<feature type="compositionally biased region" description="Basic and acidic residues" evidence="3">
    <location>
        <begin position="918"/>
        <end position="938"/>
    </location>
</feature>
<feature type="binding site" evidence="1">
    <location>
        <begin position="202"/>
        <end position="209"/>
    </location>
    <ligand>
        <name>GTP</name>
        <dbReference type="ChEBI" id="CHEBI:37565"/>
    </ligand>
</feature>
<comment type="function">
    <text evidence="1">Cooperates with the reticulon proteins and tubule-shaping DP1 family proteins to generate and maintain the structure of the tubular endoplasmic reticulum network. Has GTPase activity, which is required for its function in ER organization.</text>
</comment>
<comment type="subcellular location">
    <subcellularLocation>
        <location evidence="1">Endoplasmic reticulum membrane</location>
        <topology evidence="1">Multi-pass membrane protein</topology>
    </subcellularLocation>
    <text evidence="1">Enriched in the cortical ER. Concentrated in punctae along the ER tubules.</text>
</comment>
<comment type="similarity">
    <text evidence="2">Belongs to the TRAFAC class dynamin-like GTPase superfamily. GB1/RHD3 GTPase family. RHD3 subfamily.</text>
</comment>